<comment type="function">
    <text evidence="1 3">Sliding clamp subunit that acts as a moving platform for DNA processing. Responsible for tethering the catalytic subunit of DNA polymerase to DNA during high-speed replication (By similarity). In conjunction with replication factor C (RFC) stimulates DNA synthesis by PolB, relieving inhibition by replication protein A (RPA).</text>
</comment>
<comment type="subunit">
    <text evidence="2">Homotrimer. The subunits circularize to form a toroid; DNA passes through its center. Replication factor C (RFC) is required to load the toroid on the DNA.</text>
</comment>
<comment type="similarity">
    <text evidence="2">Belongs to the PCNA family.</text>
</comment>
<reference key="1">
    <citation type="journal article" date="1997" name="J. Bacteriol.">
        <title>Complete genome sequence of Methanobacterium thermoautotrophicum deltaH: functional analysis and comparative genomics.</title>
        <authorList>
            <person name="Smith D.R."/>
            <person name="Doucette-Stamm L.A."/>
            <person name="Deloughery C."/>
            <person name="Lee H.-M."/>
            <person name="Dubois J."/>
            <person name="Aldredge T."/>
            <person name="Bashirzadeh R."/>
            <person name="Blakely D."/>
            <person name="Cook R."/>
            <person name="Gilbert K."/>
            <person name="Harrison D."/>
            <person name="Hoang L."/>
            <person name="Keagle P."/>
            <person name="Lumm W."/>
            <person name="Pothier B."/>
            <person name="Qiu D."/>
            <person name="Spadafora R."/>
            <person name="Vicare R."/>
            <person name="Wang Y."/>
            <person name="Wierzbowski J."/>
            <person name="Gibson R."/>
            <person name="Jiwani N."/>
            <person name="Caruso A."/>
            <person name="Bush D."/>
            <person name="Safer H."/>
            <person name="Patwell D."/>
            <person name="Prabhakar S."/>
            <person name="McDougall S."/>
            <person name="Shimer G."/>
            <person name="Goyal A."/>
            <person name="Pietrovski S."/>
            <person name="Church G.M."/>
            <person name="Daniels C.J."/>
            <person name="Mao J.-I."/>
            <person name="Rice P."/>
            <person name="Noelling J."/>
            <person name="Reeve J.N."/>
        </authorList>
    </citation>
    <scope>NUCLEOTIDE SEQUENCE [LARGE SCALE GENOMIC DNA]</scope>
    <source>
        <strain>ATCC 29096 / DSM 1053 / JCM 10044 / NBRC 100330 / Delta H</strain>
    </source>
</reference>
<reference key="2">
    <citation type="journal article" date="1999" name="J. Biol. Chem.">
        <title>Isolation and characterization of a split B-type DNA polymerase from the archaeon Methanobacterium thermoautotrophicum deltaH.</title>
        <authorList>
            <person name="Kelman Z."/>
            <person name="Pietrokovski S."/>
            <person name="Hurwitz J."/>
        </authorList>
    </citation>
    <scope>FUNCTION</scope>
    <source>
        <strain>ATCC 29096 / DSM 1053 / JCM 10044 / NBRC 100330 / Delta H</strain>
    </source>
</reference>
<organism>
    <name type="scientific">Methanothermobacter thermautotrophicus (strain ATCC 29096 / DSM 1053 / JCM 10044 / NBRC 100330 / Delta H)</name>
    <name type="common">Methanobacterium thermoautotrophicum</name>
    <dbReference type="NCBI Taxonomy" id="187420"/>
    <lineage>
        <taxon>Archaea</taxon>
        <taxon>Methanobacteriati</taxon>
        <taxon>Methanobacteriota</taxon>
        <taxon>Methanomada group</taxon>
        <taxon>Methanobacteria</taxon>
        <taxon>Methanobacteriales</taxon>
        <taxon>Methanobacteriaceae</taxon>
        <taxon>Methanothermobacter</taxon>
    </lineage>
</organism>
<dbReference type="EMBL" id="AE000666">
    <property type="protein sequence ID" value="AAB85790.1"/>
    <property type="molecule type" value="Genomic_DNA"/>
</dbReference>
<dbReference type="PIR" id="D69041">
    <property type="entry name" value="D69041"/>
</dbReference>
<dbReference type="RefSeq" id="WP_010876925.1">
    <property type="nucleotide sequence ID" value="NC_000916.1"/>
</dbReference>
<dbReference type="SMR" id="O27367"/>
<dbReference type="FunCoup" id="O27367">
    <property type="interactions" value="159"/>
</dbReference>
<dbReference type="STRING" id="187420.MTH_1312"/>
<dbReference type="PaxDb" id="187420-MTH_1312"/>
<dbReference type="EnsemblBacteria" id="AAB85790">
    <property type="protein sequence ID" value="AAB85790"/>
    <property type="gene ID" value="MTH_1312"/>
</dbReference>
<dbReference type="GeneID" id="82297750"/>
<dbReference type="KEGG" id="mth:MTH_1312"/>
<dbReference type="PATRIC" id="fig|187420.15.peg.1281"/>
<dbReference type="HOGENOM" id="CLU_043978_1_1_2"/>
<dbReference type="InParanoid" id="O27367"/>
<dbReference type="Proteomes" id="UP000005223">
    <property type="component" value="Chromosome"/>
</dbReference>
<dbReference type="GO" id="GO:0003677">
    <property type="term" value="F:DNA binding"/>
    <property type="evidence" value="ECO:0007669"/>
    <property type="project" value="UniProtKB-UniRule"/>
</dbReference>
<dbReference type="GO" id="GO:0030337">
    <property type="term" value="F:DNA polymerase processivity factor activity"/>
    <property type="evidence" value="ECO:0007669"/>
    <property type="project" value="UniProtKB-UniRule"/>
</dbReference>
<dbReference type="GO" id="GO:0006272">
    <property type="term" value="P:leading strand elongation"/>
    <property type="evidence" value="ECO:0007669"/>
    <property type="project" value="TreeGrafter"/>
</dbReference>
<dbReference type="GO" id="GO:0006275">
    <property type="term" value="P:regulation of DNA replication"/>
    <property type="evidence" value="ECO:0007669"/>
    <property type="project" value="UniProtKB-UniRule"/>
</dbReference>
<dbReference type="CDD" id="cd00577">
    <property type="entry name" value="PCNA"/>
    <property type="match status" value="1"/>
</dbReference>
<dbReference type="Gene3D" id="3.70.10.10">
    <property type="match status" value="1"/>
</dbReference>
<dbReference type="HAMAP" id="MF_00317">
    <property type="entry name" value="DNApol_clamp_arch"/>
    <property type="match status" value="1"/>
</dbReference>
<dbReference type="InterPro" id="IPR046938">
    <property type="entry name" value="DNA_clamp_sf"/>
</dbReference>
<dbReference type="InterPro" id="IPR000730">
    <property type="entry name" value="Pr_cel_nuc_antig"/>
</dbReference>
<dbReference type="InterPro" id="IPR022659">
    <property type="entry name" value="Pr_cel_nuc_antig_CS"/>
</dbReference>
<dbReference type="InterPro" id="IPR022648">
    <property type="entry name" value="Pr_cel_nuc_antig_N"/>
</dbReference>
<dbReference type="NCBIfam" id="TIGR00590">
    <property type="entry name" value="pcna"/>
    <property type="match status" value="1"/>
</dbReference>
<dbReference type="NCBIfam" id="NF002222">
    <property type="entry name" value="PRK01115.1-5"/>
    <property type="match status" value="1"/>
</dbReference>
<dbReference type="PANTHER" id="PTHR11352">
    <property type="entry name" value="PROLIFERATING CELL NUCLEAR ANTIGEN"/>
    <property type="match status" value="1"/>
</dbReference>
<dbReference type="PANTHER" id="PTHR11352:SF0">
    <property type="entry name" value="PROLIFERATING CELL NUCLEAR ANTIGEN"/>
    <property type="match status" value="1"/>
</dbReference>
<dbReference type="Pfam" id="PF00705">
    <property type="entry name" value="PCNA_N"/>
    <property type="match status" value="1"/>
</dbReference>
<dbReference type="PRINTS" id="PR00339">
    <property type="entry name" value="PCNACYCLIN"/>
</dbReference>
<dbReference type="SUPFAM" id="SSF55979">
    <property type="entry name" value="DNA clamp"/>
    <property type="match status" value="2"/>
</dbReference>
<dbReference type="PROSITE" id="PS01251">
    <property type="entry name" value="PCNA_1"/>
    <property type="match status" value="1"/>
</dbReference>
<proteinExistence type="inferred from homology"/>
<protein>
    <recommendedName>
        <fullName evidence="2">DNA polymerase sliding clamp</fullName>
    </recommendedName>
    <alternativeName>
        <fullName evidence="2">Proliferating cell nuclear antigen homolog</fullName>
        <shortName evidence="2">PCNA</shortName>
    </alternativeName>
</protein>
<evidence type="ECO:0000250" key="1"/>
<evidence type="ECO:0000255" key="2">
    <source>
        <dbReference type="HAMAP-Rule" id="MF_00317"/>
    </source>
</evidence>
<evidence type="ECO:0000269" key="3">
    <source>
    </source>
</evidence>
<gene>
    <name evidence="2" type="primary">pcn</name>
    <name type="ordered locus">MTH_1312</name>
</gene>
<sequence length="244" mass="27969">MFKAELNDPNILRTSFDAISSIVDEVQIQLSAEGLRLDALDRSHITYVHLELKAELFDEYVCDEPERINVDTEELMKVLKRAKANDRVILSTDEGNLIIQFEGEAVRTFKIRLIDIEYETPSPPEIEYENEFEVPFQLLKDSIADIDIFSDKITFRVDEDRFIASAEGEFGDAQIEYLHGERIDKPARSIYSLDKIKEMLKADKFSETAIINLGDDMPLKLTLKMASKEGELSFLLAPRIEAEE</sequence>
<accession>O27367</accession>
<feature type="chain" id="PRO_0000149200" description="DNA polymerase sliding clamp">
    <location>
        <begin position="1"/>
        <end position="244"/>
    </location>
</feature>
<keyword id="KW-0235">DNA replication</keyword>
<keyword id="KW-0238">DNA-binding</keyword>
<keyword id="KW-1185">Reference proteome</keyword>
<name>PCNA_METTH</name>